<keyword id="KW-0067">ATP-binding</keyword>
<keyword id="KW-0997">Cell inner membrane</keyword>
<keyword id="KW-1003">Cell membrane</keyword>
<keyword id="KW-0963">Cytoplasm</keyword>
<keyword id="KW-0472">Membrane</keyword>
<keyword id="KW-0479">Metal-binding</keyword>
<keyword id="KW-0547">Nucleotide-binding</keyword>
<keyword id="KW-0653">Protein transport</keyword>
<keyword id="KW-1185">Reference proteome</keyword>
<keyword id="KW-1278">Translocase</keyword>
<keyword id="KW-0811">Translocation</keyword>
<keyword id="KW-0813">Transport</keyword>
<keyword id="KW-0862">Zinc</keyword>
<dbReference type="EC" id="7.4.2.8" evidence="1"/>
<dbReference type="EMBL" id="CP000112">
    <property type="protein sequence ID" value="ABB37883.2"/>
    <property type="molecule type" value="Genomic_DNA"/>
</dbReference>
<dbReference type="RefSeq" id="WP_011367114.1">
    <property type="nucleotide sequence ID" value="NC_007519.1"/>
</dbReference>
<dbReference type="SMR" id="Q313L3"/>
<dbReference type="STRING" id="207559.Dde_1082"/>
<dbReference type="KEGG" id="dde:Dde_1082"/>
<dbReference type="eggNOG" id="COG0653">
    <property type="taxonomic scope" value="Bacteria"/>
</dbReference>
<dbReference type="HOGENOM" id="CLU_005314_3_0_7"/>
<dbReference type="Proteomes" id="UP000002710">
    <property type="component" value="Chromosome"/>
</dbReference>
<dbReference type="GO" id="GO:0031522">
    <property type="term" value="C:cell envelope Sec protein transport complex"/>
    <property type="evidence" value="ECO:0007669"/>
    <property type="project" value="TreeGrafter"/>
</dbReference>
<dbReference type="GO" id="GO:0005829">
    <property type="term" value="C:cytosol"/>
    <property type="evidence" value="ECO:0007669"/>
    <property type="project" value="TreeGrafter"/>
</dbReference>
<dbReference type="GO" id="GO:0005886">
    <property type="term" value="C:plasma membrane"/>
    <property type="evidence" value="ECO:0007669"/>
    <property type="project" value="UniProtKB-SubCell"/>
</dbReference>
<dbReference type="GO" id="GO:0005524">
    <property type="term" value="F:ATP binding"/>
    <property type="evidence" value="ECO:0007669"/>
    <property type="project" value="UniProtKB-UniRule"/>
</dbReference>
<dbReference type="GO" id="GO:0046872">
    <property type="term" value="F:metal ion binding"/>
    <property type="evidence" value="ECO:0007669"/>
    <property type="project" value="UniProtKB-KW"/>
</dbReference>
<dbReference type="GO" id="GO:0008564">
    <property type="term" value="F:protein-exporting ATPase activity"/>
    <property type="evidence" value="ECO:0007669"/>
    <property type="project" value="UniProtKB-EC"/>
</dbReference>
<dbReference type="GO" id="GO:0065002">
    <property type="term" value="P:intracellular protein transmembrane transport"/>
    <property type="evidence" value="ECO:0007669"/>
    <property type="project" value="UniProtKB-UniRule"/>
</dbReference>
<dbReference type="GO" id="GO:0017038">
    <property type="term" value="P:protein import"/>
    <property type="evidence" value="ECO:0007669"/>
    <property type="project" value="InterPro"/>
</dbReference>
<dbReference type="GO" id="GO:0006605">
    <property type="term" value="P:protein targeting"/>
    <property type="evidence" value="ECO:0007669"/>
    <property type="project" value="UniProtKB-UniRule"/>
</dbReference>
<dbReference type="GO" id="GO:0043952">
    <property type="term" value="P:protein transport by the Sec complex"/>
    <property type="evidence" value="ECO:0007669"/>
    <property type="project" value="TreeGrafter"/>
</dbReference>
<dbReference type="CDD" id="cd17928">
    <property type="entry name" value="DEXDc_SecA"/>
    <property type="match status" value="1"/>
</dbReference>
<dbReference type="CDD" id="cd18803">
    <property type="entry name" value="SF2_C_secA"/>
    <property type="match status" value="1"/>
</dbReference>
<dbReference type="FunFam" id="3.40.50.300:FF:000429">
    <property type="entry name" value="Preprotein translocase subunit SecA"/>
    <property type="match status" value="1"/>
</dbReference>
<dbReference type="FunFam" id="3.90.1440.10:FF:000001">
    <property type="entry name" value="Preprotein translocase subunit SecA"/>
    <property type="match status" value="1"/>
</dbReference>
<dbReference type="FunFam" id="3.40.50.300:FF:000334">
    <property type="entry name" value="Protein translocase subunit SecA"/>
    <property type="match status" value="1"/>
</dbReference>
<dbReference type="Gene3D" id="1.10.3060.10">
    <property type="entry name" value="Helical scaffold and wing domains of SecA"/>
    <property type="match status" value="1"/>
</dbReference>
<dbReference type="Gene3D" id="3.40.50.300">
    <property type="entry name" value="P-loop containing nucleotide triphosphate hydrolases"/>
    <property type="match status" value="3"/>
</dbReference>
<dbReference type="Gene3D" id="3.90.1440.10">
    <property type="entry name" value="SecA, preprotein cross-linking domain"/>
    <property type="match status" value="1"/>
</dbReference>
<dbReference type="HAMAP" id="MF_01382">
    <property type="entry name" value="SecA"/>
    <property type="match status" value="1"/>
</dbReference>
<dbReference type="InterPro" id="IPR014001">
    <property type="entry name" value="Helicase_ATP-bd"/>
</dbReference>
<dbReference type="InterPro" id="IPR001650">
    <property type="entry name" value="Helicase_C-like"/>
</dbReference>
<dbReference type="InterPro" id="IPR027417">
    <property type="entry name" value="P-loop_NTPase"/>
</dbReference>
<dbReference type="InterPro" id="IPR004027">
    <property type="entry name" value="SEC_C_motif"/>
</dbReference>
<dbReference type="InterPro" id="IPR000185">
    <property type="entry name" value="SecA"/>
</dbReference>
<dbReference type="InterPro" id="IPR020937">
    <property type="entry name" value="SecA_CS"/>
</dbReference>
<dbReference type="InterPro" id="IPR011115">
    <property type="entry name" value="SecA_DEAD"/>
</dbReference>
<dbReference type="InterPro" id="IPR014018">
    <property type="entry name" value="SecA_motor_DEAD"/>
</dbReference>
<dbReference type="InterPro" id="IPR011130">
    <property type="entry name" value="SecA_preprotein_X-link_dom"/>
</dbReference>
<dbReference type="InterPro" id="IPR044722">
    <property type="entry name" value="SecA_SF2_C"/>
</dbReference>
<dbReference type="InterPro" id="IPR011116">
    <property type="entry name" value="SecA_Wing/Scaffold"/>
</dbReference>
<dbReference type="InterPro" id="IPR036266">
    <property type="entry name" value="SecA_Wing/Scaffold_sf"/>
</dbReference>
<dbReference type="InterPro" id="IPR036670">
    <property type="entry name" value="SecA_X-link_sf"/>
</dbReference>
<dbReference type="NCBIfam" id="NF006630">
    <property type="entry name" value="PRK09200.1"/>
    <property type="match status" value="1"/>
</dbReference>
<dbReference type="NCBIfam" id="NF009538">
    <property type="entry name" value="PRK12904.1"/>
    <property type="match status" value="1"/>
</dbReference>
<dbReference type="NCBIfam" id="TIGR00963">
    <property type="entry name" value="secA"/>
    <property type="match status" value="1"/>
</dbReference>
<dbReference type="PANTHER" id="PTHR30612:SF0">
    <property type="entry name" value="CHLOROPLAST PROTEIN-TRANSPORTING ATPASE"/>
    <property type="match status" value="1"/>
</dbReference>
<dbReference type="PANTHER" id="PTHR30612">
    <property type="entry name" value="SECA INNER MEMBRANE COMPONENT OF SEC PROTEIN SECRETION SYSTEM"/>
    <property type="match status" value="1"/>
</dbReference>
<dbReference type="Pfam" id="PF21090">
    <property type="entry name" value="P-loop_SecA"/>
    <property type="match status" value="2"/>
</dbReference>
<dbReference type="Pfam" id="PF02810">
    <property type="entry name" value="SEC-C"/>
    <property type="match status" value="1"/>
</dbReference>
<dbReference type="Pfam" id="PF07517">
    <property type="entry name" value="SecA_DEAD"/>
    <property type="match status" value="1"/>
</dbReference>
<dbReference type="Pfam" id="PF01043">
    <property type="entry name" value="SecA_PP_bind"/>
    <property type="match status" value="1"/>
</dbReference>
<dbReference type="Pfam" id="PF07516">
    <property type="entry name" value="SecA_SW"/>
    <property type="match status" value="1"/>
</dbReference>
<dbReference type="PRINTS" id="PR00906">
    <property type="entry name" value="SECA"/>
</dbReference>
<dbReference type="SMART" id="SM00957">
    <property type="entry name" value="SecA_DEAD"/>
    <property type="match status" value="1"/>
</dbReference>
<dbReference type="SMART" id="SM00958">
    <property type="entry name" value="SecA_PP_bind"/>
    <property type="match status" value="1"/>
</dbReference>
<dbReference type="SUPFAM" id="SSF81886">
    <property type="entry name" value="Helical scaffold and wing domains of SecA"/>
    <property type="match status" value="1"/>
</dbReference>
<dbReference type="SUPFAM" id="SSF52540">
    <property type="entry name" value="P-loop containing nucleoside triphosphate hydrolases"/>
    <property type="match status" value="2"/>
</dbReference>
<dbReference type="SUPFAM" id="SSF81767">
    <property type="entry name" value="Pre-protein crosslinking domain of SecA"/>
    <property type="match status" value="1"/>
</dbReference>
<dbReference type="PROSITE" id="PS01312">
    <property type="entry name" value="SECA"/>
    <property type="match status" value="1"/>
</dbReference>
<dbReference type="PROSITE" id="PS51196">
    <property type="entry name" value="SECA_MOTOR_DEAD"/>
    <property type="match status" value="1"/>
</dbReference>
<name>SECA_OLEA2</name>
<organism>
    <name type="scientific">Oleidesulfovibrio alaskensis (strain ATCC BAA-1058 / DSM 17464 / G20)</name>
    <name type="common">Desulfovibrio alaskensis</name>
    <dbReference type="NCBI Taxonomy" id="207559"/>
    <lineage>
        <taxon>Bacteria</taxon>
        <taxon>Pseudomonadati</taxon>
        <taxon>Thermodesulfobacteriota</taxon>
        <taxon>Desulfovibrionia</taxon>
        <taxon>Desulfovibrionales</taxon>
        <taxon>Desulfovibrionaceae</taxon>
        <taxon>Oleidesulfovibrio</taxon>
    </lineage>
</organism>
<proteinExistence type="inferred from homology"/>
<sequence>MLGSIVKKVFGSKNDRYLKSLNHYLKEINALEENIATMPDEAISARMAELRAEVQQGTSLDSILPEVFAMVREAGKRVLGMRHYDVQMVGGIALHSGKIAEMRTGEGKTLVATLPAALNALTGKGVHLITVNDYLARRDAEWMGKIYNFLGLSVGVIVHGLNDEERRAAYASDITYGTNNEFGFDYLRDNMKFYKEQLVQRPHHFAIVDEVDSILIDEARTPLIISGPSDESTGLYRRVNDIIPRLKRDTHYTVDEKARAAALTDEGVQEAEKLLGLDNLYDPQNISFQHHILQALKAHSIFTRDVDYIVKDDQVVIVDEFTGRLMPGRRFSDGLHQALEAKEGVKVEAENQTLASITFQNYFRMYEKLSGMTGTADTEAVEFQQIYDLEVVNIPTNKPMIRKDQPDSIYRTRPEKFNAIVEEIARLHHKGQPVLVGTISIETSELIAGMLKKKGVPHNVLNAKQHEKEAEIVAEAGQAGKVTIATNMAGRGTDIVLGEGVPQLGGLYILGTERHESRRIDNQLRGRSGRQGDPGETRFFLSLEDDLLRLFGSDRIAGLMERLGMQEGEPIENKMVSRAIENAQKRVEGHNFEIRKTLLDYDNVMNQQREVIYSLRRDTMMEDDLEPSVHEFLDDIIEDIYAPLEQTKGKALDEETHAAIAARLEETFFLSRVYPEFALKGSEQQEKLPELPSAADVKKAVESMLEKLKRDAGPVYGDILRYFLLEELDRNWKEHLLNMDHLRDGIGLRGYGQRDPKQEYKREGFSLFQNMLWSIKESVFRALTRLRLQRVEEAADPAEQPEAAGLQEAKATELRHKEQPAELSYSGGDEDGAKTPSRRNAPKVGRNDPCPCGSGKKYKKCCGA</sequence>
<evidence type="ECO:0000255" key="1">
    <source>
        <dbReference type="HAMAP-Rule" id="MF_01382"/>
    </source>
</evidence>
<evidence type="ECO:0000256" key="2">
    <source>
        <dbReference type="SAM" id="MobiDB-lite"/>
    </source>
</evidence>
<accession>Q313L3</accession>
<protein>
    <recommendedName>
        <fullName evidence="1">Protein translocase subunit SecA</fullName>
        <ecNumber evidence="1">7.4.2.8</ecNumber>
    </recommendedName>
</protein>
<gene>
    <name evidence="1" type="primary">secA</name>
    <name type="ordered locus">Dde_1082</name>
</gene>
<comment type="function">
    <text evidence="1">Part of the Sec protein translocase complex. Interacts with the SecYEG preprotein conducting channel. Has a central role in coupling the hydrolysis of ATP to the transfer of proteins into and across the cell membrane, serving as an ATP-driven molecular motor driving the stepwise translocation of polypeptide chains across the membrane.</text>
</comment>
<comment type="catalytic activity">
    <reaction evidence="1">
        <text>ATP + H2O + cellular proteinSide 1 = ADP + phosphate + cellular proteinSide 2.</text>
        <dbReference type="EC" id="7.4.2.8"/>
    </reaction>
</comment>
<comment type="cofactor">
    <cofactor evidence="1">
        <name>Zn(2+)</name>
        <dbReference type="ChEBI" id="CHEBI:29105"/>
    </cofactor>
    <text evidence="1">May bind 1 zinc ion per subunit.</text>
</comment>
<comment type="subunit">
    <text evidence="1">Monomer and homodimer. Part of the essential Sec protein translocation apparatus which comprises SecA, SecYEG and auxiliary proteins SecDF-YajC and YidC.</text>
</comment>
<comment type="subcellular location">
    <subcellularLocation>
        <location evidence="1">Cell inner membrane</location>
        <topology evidence="1">Peripheral membrane protein</topology>
        <orientation evidence="1">Cytoplasmic side</orientation>
    </subcellularLocation>
    <subcellularLocation>
        <location evidence="1">Cytoplasm</location>
    </subcellularLocation>
    <text evidence="1">Distribution is 50-50.</text>
</comment>
<comment type="similarity">
    <text evidence="1">Belongs to the SecA family.</text>
</comment>
<reference key="1">
    <citation type="journal article" date="2011" name="J. Bacteriol.">
        <title>Complete genome sequence and updated annotation of Desulfovibrio alaskensis G20.</title>
        <authorList>
            <person name="Hauser L.J."/>
            <person name="Land M.L."/>
            <person name="Brown S.D."/>
            <person name="Larimer F."/>
            <person name="Keller K.L."/>
            <person name="Rapp-Giles B.J."/>
            <person name="Price M.N."/>
            <person name="Lin M."/>
            <person name="Bruce D.C."/>
            <person name="Detter J.C."/>
            <person name="Tapia R."/>
            <person name="Han C.S."/>
            <person name="Goodwin L.A."/>
            <person name="Cheng J.F."/>
            <person name="Pitluck S."/>
            <person name="Copeland A."/>
            <person name="Lucas S."/>
            <person name="Nolan M."/>
            <person name="Lapidus A.L."/>
            <person name="Palumbo A.V."/>
            <person name="Wall J.D."/>
        </authorList>
    </citation>
    <scope>NUCLEOTIDE SEQUENCE [LARGE SCALE GENOMIC DNA]</scope>
    <source>
        <strain>ATCC BAA-1058 / DSM 17464 / G20</strain>
    </source>
</reference>
<feature type="chain" id="PRO_0000318349" description="Protein translocase subunit SecA">
    <location>
        <begin position="1"/>
        <end position="864"/>
    </location>
</feature>
<feature type="region of interest" description="Disordered" evidence="2">
    <location>
        <begin position="809"/>
        <end position="864"/>
    </location>
</feature>
<feature type="compositionally biased region" description="Basic and acidic residues" evidence="2">
    <location>
        <begin position="810"/>
        <end position="820"/>
    </location>
</feature>
<feature type="binding site" evidence="1">
    <location>
        <position position="87"/>
    </location>
    <ligand>
        <name>ATP</name>
        <dbReference type="ChEBI" id="CHEBI:30616"/>
    </ligand>
</feature>
<feature type="binding site" evidence="1">
    <location>
        <begin position="105"/>
        <end position="109"/>
    </location>
    <ligand>
        <name>ATP</name>
        <dbReference type="ChEBI" id="CHEBI:30616"/>
    </ligand>
</feature>
<feature type="binding site" evidence="1">
    <location>
        <position position="494"/>
    </location>
    <ligand>
        <name>ATP</name>
        <dbReference type="ChEBI" id="CHEBI:30616"/>
    </ligand>
</feature>
<feature type="binding site" evidence="1">
    <location>
        <position position="850"/>
    </location>
    <ligand>
        <name>Zn(2+)</name>
        <dbReference type="ChEBI" id="CHEBI:29105"/>
    </ligand>
</feature>
<feature type="binding site" evidence="1">
    <location>
        <position position="852"/>
    </location>
    <ligand>
        <name>Zn(2+)</name>
        <dbReference type="ChEBI" id="CHEBI:29105"/>
    </ligand>
</feature>
<feature type="binding site" evidence="1">
    <location>
        <position position="861"/>
    </location>
    <ligand>
        <name>Zn(2+)</name>
        <dbReference type="ChEBI" id="CHEBI:29105"/>
    </ligand>
</feature>
<feature type="binding site" evidence="1">
    <location>
        <position position="862"/>
    </location>
    <ligand>
        <name>Zn(2+)</name>
        <dbReference type="ChEBI" id="CHEBI:29105"/>
    </ligand>
</feature>